<comment type="function">
    <text evidence="1">IF-3 binds to the 30S ribosomal subunit and shifts the equilibrium between 70S ribosomes and their 50S and 30S subunits in favor of the free subunits, thus enhancing the availability of 30S subunits on which protein synthesis initiation begins.</text>
</comment>
<comment type="subunit">
    <text evidence="1">Monomer.</text>
</comment>
<comment type="subcellular location">
    <subcellularLocation>
        <location evidence="1">Cytoplasm</location>
    </subcellularLocation>
</comment>
<comment type="similarity">
    <text evidence="1">Belongs to the IF-3 family.</text>
</comment>
<reference key="1">
    <citation type="journal article" date="2003" name="DNA Res.">
        <title>Complete genome structure of Gloeobacter violaceus PCC 7421, a cyanobacterium that lacks thylakoids.</title>
        <authorList>
            <person name="Nakamura Y."/>
            <person name="Kaneko T."/>
            <person name="Sato S."/>
            <person name="Mimuro M."/>
            <person name="Miyashita H."/>
            <person name="Tsuchiya T."/>
            <person name="Sasamoto S."/>
            <person name="Watanabe A."/>
            <person name="Kawashima K."/>
            <person name="Kishida Y."/>
            <person name="Kiyokawa C."/>
            <person name="Kohara M."/>
            <person name="Matsumoto M."/>
            <person name="Matsuno A."/>
            <person name="Nakazaki N."/>
            <person name="Shimpo S."/>
            <person name="Takeuchi C."/>
            <person name="Yamada M."/>
            <person name="Tabata S."/>
        </authorList>
    </citation>
    <scope>NUCLEOTIDE SEQUENCE [LARGE SCALE GENOMIC DNA]</scope>
    <source>
        <strain>ATCC 29082 / PCC 7421</strain>
    </source>
</reference>
<dbReference type="EMBL" id="BA000045">
    <property type="protein sequence ID" value="BAC89697.1"/>
    <property type="molecule type" value="Genomic_DNA"/>
</dbReference>
<dbReference type="RefSeq" id="NP_924702.1">
    <property type="nucleotide sequence ID" value="NC_005125.1"/>
</dbReference>
<dbReference type="RefSeq" id="WP_011141754.1">
    <property type="nucleotide sequence ID" value="NC_005125.1"/>
</dbReference>
<dbReference type="SMR" id="Q7NJS6"/>
<dbReference type="FunCoup" id="Q7NJS6">
    <property type="interactions" value="206"/>
</dbReference>
<dbReference type="STRING" id="251221.gene:10759248"/>
<dbReference type="EnsemblBacteria" id="BAC89697">
    <property type="protein sequence ID" value="BAC89697"/>
    <property type="gene ID" value="BAC89697"/>
</dbReference>
<dbReference type="KEGG" id="gvi:gll1756"/>
<dbReference type="PATRIC" id="fig|251221.4.peg.1786"/>
<dbReference type="eggNOG" id="COG0290">
    <property type="taxonomic scope" value="Bacteria"/>
</dbReference>
<dbReference type="HOGENOM" id="CLU_054919_3_2_3"/>
<dbReference type="InParanoid" id="Q7NJS6"/>
<dbReference type="OrthoDB" id="9806014at2"/>
<dbReference type="PhylomeDB" id="Q7NJS6"/>
<dbReference type="Proteomes" id="UP000000557">
    <property type="component" value="Chromosome"/>
</dbReference>
<dbReference type="GO" id="GO:0005829">
    <property type="term" value="C:cytosol"/>
    <property type="evidence" value="ECO:0000318"/>
    <property type="project" value="GO_Central"/>
</dbReference>
<dbReference type="GO" id="GO:0043022">
    <property type="term" value="F:ribosome binding"/>
    <property type="evidence" value="ECO:0000318"/>
    <property type="project" value="GO_Central"/>
</dbReference>
<dbReference type="GO" id="GO:0003743">
    <property type="term" value="F:translation initiation factor activity"/>
    <property type="evidence" value="ECO:0000318"/>
    <property type="project" value="GO_Central"/>
</dbReference>
<dbReference type="GO" id="GO:0032790">
    <property type="term" value="P:ribosome disassembly"/>
    <property type="evidence" value="ECO:0000318"/>
    <property type="project" value="GO_Central"/>
</dbReference>
<dbReference type="FunFam" id="3.10.20.80:FF:000001">
    <property type="entry name" value="Translation initiation factor IF-3"/>
    <property type="match status" value="1"/>
</dbReference>
<dbReference type="FunFam" id="3.30.110.10:FF:000001">
    <property type="entry name" value="Translation initiation factor IF-3"/>
    <property type="match status" value="1"/>
</dbReference>
<dbReference type="Gene3D" id="3.30.110.10">
    <property type="entry name" value="Translation initiation factor 3 (IF-3), C-terminal domain"/>
    <property type="match status" value="1"/>
</dbReference>
<dbReference type="Gene3D" id="3.10.20.80">
    <property type="entry name" value="Translation initiation factor 3 (IF-3), N-terminal domain"/>
    <property type="match status" value="1"/>
</dbReference>
<dbReference type="HAMAP" id="MF_00080">
    <property type="entry name" value="IF_3"/>
    <property type="match status" value="1"/>
</dbReference>
<dbReference type="InterPro" id="IPR036788">
    <property type="entry name" value="T_IF-3_C_sf"/>
</dbReference>
<dbReference type="InterPro" id="IPR036787">
    <property type="entry name" value="T_IF-3_N_sf"/>
</dbReference>
<dbReference type="InterPro" id="IPR019813">
    <property type="entry name" value="Translation_initiation_fac3_CS"/>
</dbReference>
<dbReference type="InterPro" id="IPR001288">
    <property type="entry name" value="Translation_initiation_fac_3"/>
</dbReference>
<dbReference type="InterPro" id="IPR019815">
    <property type="entry name" value="Translation_initiation_fac_3_C"/>
</dbReference>
<dbReference type="InterPro" id="IPR019814">
    <property type="entry name" value="Translation_initiation_fac_3_N"/>
</dbReference>
<dbReference type="NCBIfam" id="TIGR00168">
    <property type="entry name" value="infC"/>
    <property type="match status" value="1"/>
</dbReference>
<dbReference type="PANTHER" id="PTHR10938">
    <property type="entry name" value="TRANSLATION INITIATION FACTOR IF-3"/>
    <property type="match status" value="1"/>
</dbReference>
<dbReference type="PANTHER" id="PTHR10938:SF0">
    <property type="entry name" value="TRANSLATION INITIATION FACTOR IF-3, MITOCHONDRIAL"/>
    <property type="match status" value="1"/>
</dbReference>
<dbReference type="Pfam" id="PF00707">
    <property type="entry name" value="IF3_C"/>
    <property type="match status" value="1"/>
</dbReference>
<dbReference type="Pfam" id="PF05198">
    <property type="entry name" value="IF3_N"/>
    <property type="match status" value="1"/>
</dbReference>
<dbReference type="SUPFAM" id="SSF55200">
    <property type="entry name" value="Translation initiation factor IF3, C-terminal domain"/>
    <property type="match status" value="1"/>
</dbReference>
<dbReference type="SUPFAM" id="SSF54364">
    <property type="entry name" value="Translation initiation factor IF3, N-terminal domain"/>
    <property type="match status" value="1"/>
</dbReference>
<dbReference type="PROSITE" id="PS00938">
    <property type="entry name" value="IF3"/>
    <property type="match status" value="1"/>
</dbReference>
<proteinExistence type="inferred from homology"/>
<protein>
    <recommendedName>
        <fullName evidence="1">Translation initiation factor IF-3</fullName>
    </recommendedName>
</protein>
<keyword id="KW-0963">Cytoplasm</keyword>
<keyword id="KW-0396">Initiation factor</keyword>
<keyword id="KW-0648">Protein biosynthesis</keyword>
<keyword id="KW-1185">Reference proteome</keyword>
<name>IF3_GLOVI</name>
<organism>
    <name type="scientific">Gloeobacter violaceus (strain ATCC 29082 / PCC 7421)</name>
    <dbReference type="NCBI Taxonomy" id="251221"/>
    <lineage>
        <taxon>Bacteria</taxon>
        <taxon>Bacillati</taxon>
        <taxon>Cyanobacteriota</taxon>
        <taxon>Cyanophyceae</taxon>
        <taxon>Gloeobacterales</taxon>
        <taxon>Gloeobacteraceae</taxon>
        <taxon>Gloeobacter</taxon>
    </lineage>
</organism>
<gene>
    <name evidence="1" type="primary">infC</name>
    <name type="ordered locus">gll1756</name>
</gene>
<feature type="chain" id="PRO_0000177521" description="Translation initiation factor IF-3">
    <location>
        <begin position="1"/>
        <end position="199"/>
    </location>
</feature>
<sequence length="199" mass="23131">MLWLALFFGRFSRLEAPQRLVIKKRSDRGQANLPMINERIRFPKIRAIDADGTQLGIMHPRDALRIAEERNLDLVVVSEDAQPPVCRIMDYGKYKFEQEKRAKEARKKQHTADVKEVKMRYTIGEHDYQVRLRDTIRFLKDGDKVKATIMFRGREIQHANLAKDLLMQLAADSAEIGEVQQEPSVEGRNMIMILSPKRT</sequence>
<accession>Q7NJS6</accession>
<evidence type="ECO:0000255" key="1">
    <source>
        <dbReference type="HAMAP-Rule" id="MF_00080"/>
    </source>
</evidence>